<proteinExistence type="inferred from homology"/>
<sequence>MGIKGLSQVIADHAPSAIKVQEIKAFFGRKVAIDASMCLYQFLIAIRQDGSQMQSEDGETTSHLMGMFYRTIRMIDNGIKPVYVFDGKPPDMKSGELEKRTERRAEAEKALTEAKEKGDAKEAEKFERRLVKVTKQQNEEVKQLLGLMGIPVVEAPCEAEAQCANLVKAGKVYGTATEDMDALTFGSCVLLRHLLAPEAKKIPIKEFHLARVLEEMQLTKDQFIDLCILLGCDYCGTIRGIGPKKAVELIKQHKNIETVLENIDQTKYPPPADWPYKRARELFHEPEVMKCDEVELTWKDPDVEGIVKFMCGEKNFSEDRIRSAMVRMQKSRNAGTQGRIDSFFTVSSQVKCVTVAKRKAQEEAEKMKKGGKKSGPPKKKAK</sequence>
<accession>A8XL25</accession>
<dbReference type="EC" id="3.1.-.-" evidence="1"/>
<dbReference type="EMBL" id="HE600904">
    <property type="protein sequence ID" value="CAP33349.1"/>
    <property type="molecule type" value="Genomic_DNA"/>
</dbReference>
<dbReference type="SMR" id="A8XL25"/>
<dbReference type="FunCoup" id="A8XL25">
    <property type="interactions" value="2527"/>
</dbReference>
<dbReference type="STRING" id="6238.A8XL25"/>
<dbReference type="EnsemblMetazoa" id="CBG14945.1">
    <property type="protein sequence ID" value="CBG14945.1"/>
    <property type="gene ID" value="WBGene00035319"/>
</dbReference>
<dbReference type="KEGG" id="cbr:CBG_14945"/>
<dbReference type="CTD" id="8581120"/>
<dbReference type="WormBase" id="CBG14945">
    <property type="protein sequence ID" value="CBP09777"/>
    <property type="gene ID" value="WBGene00035319"/>
    <property type="gene designation" value="Cbr-crn-1"/>
</dbReference>
<dbReference type="eggNOG" id="KOG2519">
    <property type="taxonomic scope" value="Eukaryota"/>
</dbReference>
<dbReference type="HOGENOM" id="CLU_032444_2_0_1"/>
<dbReference type="InParanoid" id="A8XL25"/>
<dbReference type="OMA" id="MGIPWVQ"/>
<dbReference type="Proteomes" id="UP000008549">
    <property type="component" value="Unassembled WGS sequence"/>
</dbReference>
<dbReference type="GO" id="GO:0005739">
    <property type="term" value="C:mitochondrion"/>
    <property type="evidence" value="ECO:0007669"/>
    <property type="project" value="UniProtKB-SubCell"/>
</dbReference>
<dbReference type="GO" id="GO:0005730">
    <property type="term" value="C:nucleolus"/>
    <property type="evidence" value="ECO:0007669"/>
    <property type="project" value="UniProtKB-SubCell"/>
</dbReference>
<dbReference type="GO" id="GO:0005654">
    <property type="term" value="C:nucleoplasm"/>
    <property type="evidence" value="ECO:0007669"/>
    <property type="project" value="UniProtKB-SubCell"/>
</dbReference>
<dbReference type="GO" id="GO:0005634">
    <property type="term" value="C:nucleus"/>
    <property type="evidence" value="ECO:0000318"/>
    <property type="project" value="GO_Central"/>
</dbReference>
<dbReference type="GO" id="GO:0008409">
    <property type="term" value="F:5'-3' exonuclease activity"/>
    <property type="evidence" value="ECO:0000318"/>
    <property type="project" value="GO_Central"/>
</dbReference>
<dbReference type="GO" id="GO:0017108">
    <property type="term" value="F:5'-flap endonuclease activity"/>
    <property type="evidence" value="ECO:0000318"/>
    <property type="project" value="GO_Central"/>
</dbReference>
<dbReference type="GO" id="GO:0003677">
    <property type="term" value="F:DNA binding"/>
    <property type="evidence" value="ECO:0007669"/>
    <property type="project" value="UniProtKB-UniRule"/>
</dbReference>
<dbReference type="GO" id="GO:0000287">
    <property type="term" value="F:magnesium ion binding"/>
    <property type="evidence" value="ECO:0000318"/>
    <property type="project" value="GO_Central"/>
</dbReference>
<dbReference type="GO" id="GO:0030145">
    <property type="term" value="F:manganese ion binding"/>
    <property type="evidence" value="ECO:0000318"/>
    <property type="project" value="GO_Central"/>
</dbReference>
<dbReference type="GO" id="GO:0004523">
    <property type="term" value="F:RNA-DNA hybrid ribonuclease activity"/>
    <property type="evidence" value="ECO:0000318"/>
    <property type="project" value="GO_Central"/>
</dbReference>
<dbReference type="GO" id="GO:0006309">
    <property type="term" value="P:apoptotic DNA fragmentation"/>
    <property type="evidence" value="ECO:0007669"/>
    <property type="project" value="EnsemblMetazoa"/>
</dbReference>
<dbReference type="GO" id="GO:0006284">
    <property type="term" value="P:base-excision repair"/>
    <property type="evidence" value="ECO:0007669"/>
    <property type="project" value="UniProtKB-UniRule"/>
</dbReference>
<dbReference type="GO" id="GO:0043137">
    <property type="term" value="P:DNA replication, removal of RNA primer"/>
    <property type="evidence" value="ECO:0007669"/>
    <property type="project" value="UniProtKB-UniRule"/>
</dbReference>
<dbReference type="CDD" id="cd09907">
    <property type="entry name" value="H3TH_FEN1-Euk"/>
    <property type="match status" value="1"/>
</dbReference>
<dbReference type="CDD" id="cd09867">
    <property type="entry name" value="PIN_FEN1"/>
    <property type="match status" value="1"/>
</dbReference>
<dbReference type="FunFam" id="1.10.150.20:FF:000009">
    <property type="entry name" value="Flap endonuclease 1"/>
    <property type="match status" value="1"/>
</dbReference>
<dbReference type="FunFam" id="3.40.50.1010:FF:000003">
    <property type="entry name" value="Flap endonuclease 1"/>
    <property type="match status" value="1"/>
</dbReference>
<dbReference type="Gene3D" id="1.10.150.20">
    <property type="entry name" value="5' to 3' exonuclease, C-terminal subdomain"/>
    <property type="match status" value="1"/>
</dbReference>
<dbReference type="Gene3D" id="3.40.50.1010">
    <property type="entry name" value="5'-nuclease"/>
    <property type="match status" value="1"/>
</dbReference>
<dbReference type="HAMAP" id="MF_00614">
    <property type="entry name" value="Fen"/>
    <property type="match status" value="1"/>
</dbReference>
<dbReference type="InterPro" id="IPR002421">
    <property type="entry name" value="5-3_exonuclease"/>
</dbReference>
<dbReference type="InterPro" id="IPR036279">
    <property type="entry name" value="5-3_exonuclease_C_sf"/>
</dbReference>
<dbReference type="InterPro" id="IPR023426">
    <property type="entry name" value="Flap_endonuc"/>
</dbReference>
<dbReference type="InterPro" id="IPR008918">
    <property type="entry name" value="HhH2"/>
</dbReference>
<dbReference type="InterPro" id="IPR029060">
    <property type="entry name" value="PIN-like_dom_sf"/>
</dbReference>
<dbReference type="InterPro" id="IPR006086">
    <property type="entry name" value="XPG-I_dom"/>
</dbReference>
<dbReference type="InterPro" id="IPR006084">
    <property type="entry name" value="XPG/Rad2"/>
</dbReference>
<dbReference type="InterPro" id="IPR019974">
    <property type="entry name" value="XPG_CS"/>
</dbReference>
<dbReference type="InterPro" id="IPR006085">
    <property type="entry name" value="XPG_DNA_repair_N"/>
</dbReference>
<dbReference type="PANTHER" id="PTHR11081:SF9">
    <property type="entry name" value="FLAP ENDONUCLEASE 1"/>
    <property type="match status" value="1"/>
</dbReference>
<dbReference type="PANTHER" id="PTHR11081">
    <property type="entry name" value="FLAP ENDONUCLEASE FAMILY MEMBER"/>
    <property type="match status" value="1"/>
</dbReference>
<dbReference type="Pfam" id="PF00867">
    <property type="entry name" value="XPG_I"/>
    <property type="match status" value="1"/>
</dbReference>
<dbReference type="Pfam" id="PF00752">
    <property type="entry name" value="XPG_N"/>
    <property type="match status" value="1"/>
</dbReference>
<dbReference type="PRINTS" id="PR00853">
    <property type="entry name" value="XPGRADSUPER"/>
</dbReference>
<dbReference type="SMART" id="SM00475">
    <property type="entry name" value="53EXOc"/>
    <property type="match status" value="1"/>
</dbReference>
<dbReference type="SMART" id="SM00279">
    <property type="entry name" value="HhH2"/>
    <property type="match status" value="1"/>
</dbReference>
<dbReference type="SMART" id="SM00484">
    <property type="entry name" value="XPGI"/>
    <property type="match status" value="1"/>
</dbReference>
<dbReference type="SMART" id="SM00485">
    <property type="entry name" value="XPGN"/>
    <property type="match status" value="1"/>
</dbReference>
<dbReference type="SUPFAM" id="SSF47807">
    <property type="entry name" value="5' to 3' exonuclease, C-terminal subdomain"/>
    <property type="match status" value="1"/>
</dbReference>
<dbReference type="SUPFAM" id="SSF88723">
    <property type="entry name" value="PIN domain-like"/>
    <property type="match status" value="1"/>
</dbReference>
<dbReference type="PROSITE" id="PS00841">
    <property type="entry name" value="XPG_1"/>
    <property type="match status" value="1"/>
</dbReference>
<dbReference type="PROSITE" id="PS00842">
    <property type="entry name" value="XPG_2"/>
    <property type="match status" value="1"/>
</dbReference>
<protein>
    <recommendedName>
        <fullName evidence="1">Flap endonuclease 1</fullName>
        <shortName evidence="1">FEN-1</shortName>
        <ecNumber evidence="1">3.1.-.-</ecNumber>
    </recommendedName>
    <alternativeName>
        <fullName>Cell death-related nuclease 1</fullName>
    </alternativeName>
    <alternativeName>
        <fullName evidence="1">Flap structure-specific endonuclease 1</fullName>
    </alternativeName>
</protein>
<evidence type="ECO:0000255" key="1">
    <source>
        <dbReference type="HAMAP-Rule" id="MF_03140"/>
    </source>
</evidence>
<evidence type="ECO:0000256" key="2">
    <source>
        <dbReference type="SAM" id="MobiDB-lite"/>
    </source>
</evidence>
<gene>
    <name evidence="1" type="primary">crn-1</name>
    <name type="ORF">CBG14945</name>
</gene>
<reference key="1">
    <citation type="journal article" date="2003" name="PLoS Biol.">
        <title>The genome sequence of Caenorhabditis briggsae: a platform for comparative genomics.</title>
        <authorList>
            <person name="Stein L.D."/>
            <person name="Bao Z."/>
            <person name="Blasiar D."/>
            <person name="Blumenthal T."/>
            <person name="Brent M.R."/>
            <person name="Chen N."/>
            <person name="Chinwalla A."/>
            <person name="Clarke L."/>
            <person name="Clee C."/>
            <person name="Coghlan A."/>
            <person name="Coulson A."/>
            <person name="D'Eustachio P."/>
            <person name="Fitch D.H.A."/>
            <person name="Fulton L.A."/>
            <person name="Fulton R.E."/>
            <person name="Griffiths-Jones S."/>
            <person name="Harris T.W."/>
            <person name="Hillier L.W."/>
            <person name="Kamath R."/>
            <person name="Kuwabara P.E."/>
            <person name="Mardis E.R."/>
            <person name="Marra M.A."/>
            <person name="Miner T.L."/>
            <person name="Minx P."/>
            <person name="Mullikin J.C."/>
            <person name="Plumb R.W."/>
            <person name="Rogers J."/>
            <person name="Schein J.E."/>
            <person name="Sohrmann M."/>
            <person name="Spieth J."/>
            <person name="Stajich J.E."/>
            <person name="Wei C."/>
            <person name="Willey D."/>
            <person name="Wilson R.K."/>
            <person name="Durbin R.M."/>
            <person name="Waterston R.H."/>
        </authorList>
    </citation>
    <scope>NUCLEOTIDE SEQUENCE [LARGE SCALE GENOMIC DNA]</scope>
    <source>
        <strain>AF16</strain>
    </source>
</reference>
<organism>
    <name type="scientific">Caenorhabditis briggsae</name>
    <dbReference type="NCBI Taxonomy" id="6238"/>
    <lineage>
        <taxon>Eukaryota</taxon>
        <taxon>Metazoa</taxon>
        <taxon>Ecdysozoa</taxon>
        <taxon>Nematoda</taxon>
        <taxon>Chromadorea</taxon>
        <taxon>Rhabditida</taxon>
        <taxon>Rhabditina</taxon>
        <taxon>Rhabditomorpha</taxon>
        <taxon>Rhabditoidea</taxon>
        <taxon>Rhabditidae</taxon>
        <taxon>Peloderinae</taxon>
        <taxon>Caenorhabditis</taxon>
    </lineage>
</organism>
<name>FEN1_CAEBR</name>
<comment type="function">
    <text evidence="1">Structure-specific nuclease with 5'-flap endonuclease and 5'-3' exonuclease activities involved in DNA replication and repair. During DNA replication, cleaves the 5'-overhanging flap structure that is generated by displacement synthesis when DNA polymerase encounters the 5'-end of a downstream Okazaki fragment. It enters the flap from the 5'-end and then tracks to cleave the flap base, leaving a nick for ligation. Also involved in the long patch base excision repair (LP-BER) pathway, by cleaving within the apurinic/apyrimidinic (AP) site-terminated flap. Acts as a genome stabilization factor that prevents flaps from equilibrating into structures that lead to duplications and deletions. Also possesses 5'-3' exonuclease activity on nicked or gapped double-stranded DNA, and exhibits RNase H activity. Also involved in replication and repair of rDNA and in repairing mitochondrial DNA.</text>
</comment>
<comment type="cofactor">
    <cofactor evidence="1">
        <name>Mg(2+)</name>
        <dbReference type="ChEBI" id="CHEBI:18420"/>
    </cofactor>
    <text evidence="1">Binds 2 magnesium ions per subunit. They probably participate in the reaction catalyzed by the enzyme. May bind an additional third magnesium ion after substrate binding.</text>
</comment>
<comment type="subunit">
    <text evidence="1">Interacts with PCNA. Three molecules of crn-1 bind to one PCNA trimer with each molecule binding to one PCNA monomer. PCNA stimulates the nuclease activity without altering cleavage specificity.</text>
</comment>
<comment type="subcellular location">
    <subcellularLocation>
        <location evidence="1">Nucleus</location>
        <location evidence="1">Nucleolus</location>
    </subcellularLocation>
    <subcellularLocation>
        <location evidence="1">Nucleus</location>
        <location evidence="1">Nucleoplasm</location>
    </subcellularLocation>
    <subcellularLocation>
        <location evidence="1">Mitochondrion</location>
    </subcellularLocation>
    <text evidence="1">Resides mostly in the nucleoli and relocalizes to the nucleoplasm upon DNA damage.</text>
</comment>
<comment type="PTM">
    <text evidence="1">Phosphorylated. Phosphorylation upon DNA damage induces relocalization to the nuclear plasma.</text>
</comment>
<comment type="similarity">
    <text evidence="1">Belongs to the XPG/RAD2 endonuclease family. FEN1 subfamily.</text>
</comment>
<keyword id="KW-0227">DNA damage</keyword>
<keyword id="KW-0234">DNA repair</keyword>
<keyword id="KW-0235">DNA replication</keyword>
<keyword id="KW-0255">Endonuclease</keyword>
<keyword id="KW-0269">Exonuclease</keyword>
<keyword id="KW-0378">Hydrolase</keyword>
<keyword id="KW-0460">Magnesium</keyword>
<keyword id="KW-0479">Metal-binding</keyword>
<keyword id="KW-0496">Mitochondrion</keyword>
<keyword id="KW-0540">Nuclease</keyword>
<keyword id="KW-0539">Nucleus</keyword>
<keyword id="KW-0597">Phosphoprotein</keyword>
<keyword id="KW-1185">Reference proteome</keyword>
<feature type="chain" id="PRO_0000403512" description="Flap endonuclease 1">
    <location>
        <begin position="1"/>
        <end position="382"/>
    </location>
</feature>
<feature type="region of interest" description="N-domain">
    <location>
        <begin position="1"/>
        <end position="104"/>
    </location>
</feature>
<feature type="region of interest" description="I-domain">
    <location>
        <begin position="122"/>
        <end position="253"/>
    </location>
</feature>
<feature type="region of interest" description="Interaction with PCNA" evidence="1">
    <location>
        <begin position="336"/>
        <end position="344"/>
    </location>
</feature>
<feature type="region of interest" description="Disordered" evidence="2">
    <location>
        <begin position="359"/>
        <end position="382"/>
    </location>
</feature>
<feature type="compositionally biased region" description="Basic and acidic residues" evidence="2">
    <location>
        <begin position="359"/>
        <end position="368"/>
    </location>
</feature>
<feature type="compositionally biased region" description="Basic residues" evidence="2">
    <location>
        <begin position="369"/>
        <end position="382"/>
    </location>
</feature>
<feature type="binding site" evidence="1">
    <location>
        <position position="34"/>
    </location>
    <ligand>
        <name>Mg(2+)</name>
        <dbReference type="ChEBI" id="CHEBI:18420"/>
        <label>1</label>
    </ligand>
</feature>
<feature type="binding site" evidence="1">
    <location>
        <position position="47"/>
    </location>
    <ligand>
        <name>DNA</name>
        <dbReference type="ChEBI" id="CHEBI:16991"/>
    </ligand>
</feature>
<feature type="binding site" evidence="1">
    <location>
        <position position="70"/>
    </location>
    <ligand>
        <name>DNA</name>
        <dbReference type="ChEBI" id="CHEBI:16991"/>
    </ligand>
</feature>
<feature type="binding site" evidence="1">
    <location>
        <position position="86"/>
    </location>
    <ligand>
        <name>Mg(2+)</name>
        <dbReference type="ChEBI" id="CHEBI:18420"/>
        <label>1</label>
    </ligand>
</feature>
<feature type="binding site" evidence="1">
    <location>
        <position position="158"/>
    </location>
    <ligand>
        <name>DNA</name>
        <dbReference type="ChEBI" id="CHEBI:16991"/>
    </ligand>
</feature>
<feature type="binding site" evidence="1">
    <location>
        <position position="158"/>
    </location>
    <ligand>
        <name>Mg(2+)</name>
        <dbReference type="ChEBI" id="CHEBI:18420"/>
        <label>1</label>
    </ligand>
</feature>
<feature type="binding site" evidence="1">
    <location>
        <position position="160"/>
    </location>
    <ligand>
        <name>Mg(2+)</name>
        <dbReference type="ChEBI" id="CHEBI:18420"/>
        <label>1</label>
    </ligand>
</feature>
<feature type="binding site" evidence="1">
    <location>
        <position position="179"/>
    </location>
    <ligand>
        <name>Mg(2+)</name>
        <dbReference type="ChEBI" id="CHEBI:18420"/>
        <label>2</label>
    </ligand>
</feature>
<feature type="binding site" evidence="1">
    <location>
        <position position="181"/>
    </location>
    <ligand>
        <name>Mg(2+)</name>
        <dbReference type="ChEBI" id="CHEBI:18420"/>
        <label>2</label>
    </ligand>
</feature>
<feature type="binding site" evidence="1">
    <location>
        <position position="231"/>
    </location>
    <ligand>
        <name>DNA</name>
        <dbReference type="ChEBI" id="CHEBI:16991"/>
    </ligand>
</feature>
<feature type="binding site" evidence="1">
    <location>
        <position position="233"/>
    </location>
    <ligand>
        <name>DNA</name>
        <dbReference type="ChEBI" id="CHEBI:16991"/>
    </ligand>
</feature>
<feature type="binding site" evidence="1">
    <location>
        <position position="233"/>
    </location>
    <ligand>
        <name>Mg(2+)</name>
        <dbReference type="ChEBI" id="CHEBI:18420"/>
        <label>2</label>
    </ligand>
</feature>